<gene>
    <name type="primary">rabH</name>
    <name type="ORF">DDB_G0275955</name>
</gene>
<organism>
    <name type="scientific">Dictyostelium discoideum</name>
    <name type="common">Social amoeba</name>
    <dbReference type="NCBI Taxonomy" id="44689"/>
    <lineage>
        <taxon>Eukaryota</taxon>
        <taxon>Amoebozoa</taxon>
        <taxon>Evosea</taxon>
        <taxon>Eumycetozoa</taxon>
        <taxon>Dictyostelia</taxon>
        <taxon>Dictyosteliales</taxon>
        <taxon>Dictyosteliaceae</taxon>
        <taxon>Dictyostelium</taxon>
    </lineage>
</organism>
<proteinExistence type="inferred from homology"/>
<sequence>MIKDNIKLKLTIIGDWNVGKSSLLYRFFNDVFYEQTKLSMGEHFFYKTVLIRGESIDLQITDTSGMEKFRSLNNSFYSNLDGILIVYDISDQETFENTKLWLNEANKLAPKDCIKIIVASKFDLENKVVDSNIVKSYADNLNLKFFETSSKNSINVEETFITLVEDILLKKNYQFNNITKNKNNQDEDFNKKKGCSIN</sequence>
<name>RABH_DICDI</name>
<accession>Q86JC8</accession>
<accession>Q552M4</accession>
<comment type="subcellular location">
    <subcellularLocation>
        <location evidence="3">Cell membrane</location>
        <topology evidence="3">Lipid-anchor</topology>
        <orientation evidence="3">Cytoplasmic side</orientation>
    </subcellularLocation>
</comment>
<comment type="similarity">
    <text evidence="3">Belongs to the small GTPase superfamily. Rab family.</text>
</comment>
<keyword id="KW-1003">Cell membrane</keyword>
<keyword id="KW-0342">GTP-binding</keyword>
<keyword id="KW-0449">Lipoprotein</keyword>
<keyword id="KW-0472">Membrane</keyword>
<keyword id="KW-0488">Methylation</keyword>
<keyword id="KW-0547">Nucleotide-binding</keyword>
<keyword id="KW-0636">Prenylation</keyword>
<keyword id="KW-1185">Reference proteome</keyword>
<reference key="1">
    <citation type="journal article" date="2002" name="Nature">
        <title>Sequence and analysis of chromosome 2 of Dictyostelium discoideum.</title>
        <authorList>
            <person name="Gloeckner G."/>
            <person name="Eichinger L."/>
            <person name="Szafranski K."/>
            <person name="Pachebat J.A."/>
            <person name="Bankier A.T."/>
            <person name="Dear P.H."/>
            <person name="Lehmann R."/>
            <person name="Baumgart C."/>
            <person name="Parra G."/>
            <person name="Abril J.F."/>
            <person name="Guigo R."/>
            <person name="Kumpf K."/>
            <person name="Tunggal B."/>
            <person name="Cox E.C."/>
            <person name="Quail M.A."/>
            <person name="Platzer M."/>
            <person name="Rosenthal A."/>
            <person name="Noegel A.A."/>
        </authorList>
    </citation>
    <scope>NUCLEOTIDE SEQUENCE [LARGE SCALE GENOMIC DNA]</scope>
    <source>
        <strain>AX4</strain>
    </source>
</reference>
<reference key="2">
    <citation type="journal article" date="2005" name="Nature">
        <title>The genome of the social amoeba Dictyostelium discoideum.</title>
        <authorList>
            <person name="Eichinger L."/>
            <person name="Pachebat J.A."/>
            <person name="Gloeckner G."/>
            <person name="Rajandream M.A."/>
            <person name="Sucgang R."/>
            <person name="Berriman M."/>
            <person name="Song J."/>
            <person name="Olsen R."/>
            <person name="Szafranski K."/>
            <person name="Xu Q."/>
            <person name="Tunggal B."/>
            <person name="Kummerfeld S."/>
            <person name="Madera M."/>
            <person name="Konfortov B.A."/>
            <person name="Rivero F."/>
            <person name="Bankier A.T."/>
            <person name="Lehmann R."/>
            <person name="Hamlin N."/>
            <person name="Davies R."/>
            <person name="Gaudet P."/>
            <person name="Fey P."/>
            <person name="Pilcher K."/>
            <person name="Chen G."/>
            <person name="Saunders D."/>
            <person name="Sodergren E.J."/>
            <person name="Davis P."/>
            <person name="Kerhornou A."/>
            <person name="Nie X."/>
            <person name="Hall N."/>
            <person name="Anjard C."/>
            <person name="Hemphill L."/>
            <person name="Bason N."/>
            <person name="Farbrother P."/>
            <person name="Desany B."/>
            <person name="Just E."/>
            <person name="Morio T."/>
            <person name="Rost R."/>
            <person name="Churcher C.M."/>
            <person name="Cooper J."/>
            <person name="Haydock S."/>
            <person name="van Driessche N."/>
            <person name="Cronin A."/>
            <person name="Goodhead I."/>
            <person name="Muzny D.M."/>
            <person name="Mourier T."/>
            <person name="Pain A."/>
            <person name="Lu M."/>
            <person name="Harper D."/>
            <person name="Lindsay R."/>
            <person name="Hauser H."/>
            <person name="James K.D."/>
            <person name="Quiles M."/>
            <person name="Madan Babu M."/>
            <person name="Saito T."/>
            <person name="Buchrieser C."/>
            <person name="Wardroper A."/>
            <person name="Felder M."/>
            <person name="Thangavelu M."/>
            <person name="Johnson D."/>
            <person name="Knights A."/>
            <person name="Loulseged H."/>
            <person name="Mungall K.L."/>
            <person name="Oliver K."/>
            <person name="Price C."/>
            <person name="Quail M.A."/>
            <person name="Urushihara H."/>
            <person name="Hernandez J."/>
            <person name="Rabbinowitsch E."/>
            <person name="Steffen D."/>
            <person name="Sanders M."/>
            <person name="Ma J."/>
            <person name="Kohara Y."/>
            <person name="Sharp S."/>
            <person name="Simmonds M.N."/>
            <person name="Spiegler S."/>
            <person name="Tivey A."/>
            <person name="Sugano S."/>
            <person name="White B."/>
            <person name="Walker D."/>
            <person name="Woodward J.R."/>
            <person name="Winckler T."/>
            <person name="Tanaka Y."/>
            <person name="Shaulsky G."/>
            <person name="Schleicher M."/>
            <person name="Weinstock G.M."/>
            <person name="Rosenthal A."/>
            <person name="Cox E.C."/>
            <person name="Chisholm R.L."/>
            <person name="Gibbs R.A."/>
            <person name="Loomis W.F."/>
            <person name="Platzer M."/>
            <person name="Kay R.R."/>
            <person name="Williams J.G."/>
            <person name="Dear P.H."/>
            <person name="Noegel A.A."/>
            <person name="Barrell B.G."/>
            <person name="Kuspa A."/>
        </authorList>
    </citation>
    <scope>NUCLEOTIDE SEQUENCE [LARGE SCALE GENOMIC DNA]</scope>
    <source>
        <strain>AX4</strain>
    </source>
</reference>
<protein>
    <recommendedName>
        <fullName>Ras-related protein RabH</fullName>
    </recommendedName>
</protein>
<evidence type="ECO:0000250" key="1"/>
<evidence type="ECO:0000255" key="2"/>
<evidence type="ECO:0000305" key="3"/>
<dbReference type="EMBL" id="AAFI02000013">
    <property type="protein sequence ID" value="EAL69434.1"/>
    <property type="molecule type" value="Genomic_DNA"/>
</dbReference>
<dbReference type="RefSeq" id="XP_643388.1">
    <property type="nucleotide sequence ID" value="XM_638296.1"/>
</dbReference>
<dbReference type="SMR" id="Q86JC8"/>
<dbReference type="STRING" id="44689.Q86JC8"/>
<dbReference type="PaxDb" id="44689-DDB0229405"/>
<dbReference type="EnsemblProtists" id="EAL69434">
    <property type="protein sequence ID" value="EAL69434"/>
    <property type="gene ID" value="DDB_G0275955"/>
</dbReference>
<dbReference type="GeneID" id="8620273"/>
<dbReference type="KEGG" id="ddi:DDB_G0275955"/>
<dbReference type="dictyBase" id="DDB_G0275955">
    <property type="gene designation" value="rabH"/>
</dbReference>
<dbReference type="VEuPathDB" id="AmoebaDB:DDB_G0275955"/>
<dbReference type="eggNOG" id="KOG0084">
    <property type="taxonomic scope" value="Eukaryota"/>
</dbReference>
<dbReference type="HOGENOM" id="CLU_041217_23_1_1"/>
<dbReference type="InParanoid" id="Q86JC8"/>
<dbReference type="OMA" id="CIKIIVA"/>
<dbReference type="PhylomeDB" id="Q86JC8"/>
<dbReference type="PRO" id="PR:Q86JC8"/>
<dbReference type="Proteomes" id="UP000002195">
    <property type="component" value="Chromosome 2"/>
</dbReference>
<dbReference type="GO" id="GO:0005886">
    <property type="term" value="C:plasma membrane"/>
    <property type="evidence" value="ECO:0007669"/>
    <property type="project" value="UniProtKB-SubCell"/>
</dbReference>
<dbReference type="GO" id="GO:0005525">
    <property type="term" value="F:GTP binding"/>
    <property type="evidence" value="ECO:0000318"/>
    <property type="project" value="GO_Central"/>
</dbReference>
<dbReference type="GO" id="GO:0003924">
    <property type="term" value="F:GTPase activity"/>
    <property type="evidence" value="ECO:0000318"/>
    <property type="project" value="GO_Central"/>
</dbReference>
<dbReference type="GO" id="GO:0016192">
    <property type="term" value="P:vesicle-mediated transport"/>
    <property type="evidence" value="ECO:0000318"/>
    <property type="project" value="GO_Central"/>
</dbReference>
<dbReference type="CDD" id="cd00154">
    <property type="entry name" value="Rab"/>
    <property type="match status" value="1"/>
</dbReference>
<dbReference type="FunFam" id="3.40.50.300:FF:004754">
    <property type="entry name" value="Ras-related protein RabZ"/>
    <property type="match status" value="1"/>
</dbReference>
<dbReference type="Gene3D" id="3.40.50.300">
    <property type="entry name" value="P-loop containing nucleotide triphosphate hydrolases"/>
    <property type="match status" value="1"/>
</dbReference>
<dbReference type="InterPro" id="IPR027417">
    <property type="entry name" value="P-loop_NTPase"/>
</dbReference>
<dbReference type="InterPro" id="IPR050227">
    <property type="entry name" value="Rab"/>
</dbReference>
<dbReference type="InterPro" id="IPR005225">
    <property type="entry name" value="Small_GTP-bd"/>
</dbReference>
<dbReference type="InterPro" id="IPR001806">
    <property type="entry name" value="Small_GTPase"/>
</dbReference>
<dbReference type="NCBIfam" id="TIGR00231">
    <property type="entry name" value="small_GTP"/>
    <property type="match status" value="1"/>
</dbReference>
<dbReference type="PANTHER" id="PTHR47977">
    <property type="entry name" value="RAS-RELATED PROTEIN RAB"/>
    <property type="match status" value="1"/>
</dbReference>
<dbReference type="Pfam" id="PF00071">
    <property type="entry name" value="Ras"/>
    <property type="match status" value="1"/>
</dbReference>
<dbReference type="PRINTS" id="PR00449">
    <property type="entry name" value="RASTRNSFRMNG"/>
</dbReference>
<dbReference type="SMART" id="SM00175">
    <property type="entry name" value="RAB"/>
    <property type="match status" value="1"/>
</dbReference>
<dbReference type="SMART" id="SM00173">
    <property type="entry name" value="RAS"/>
    <property type="match status" value="1"/>
</dbReference>
<dbReference type="SMART" id="SM00174">
    <property type="entry name" value="RHO"/>
    <property type="match status" value="1"/>
</dbReference>
<dbReference type="SUPFAM" id="SSF52540">
    <property type="entry name" value="P-loop containing nucleoside triphosphate hydrolases"/>
    <property type="match status" value="1"/>
</dbReference>
<dbReference type="PROSITE" id="PS51419">
    <property type="entry name" value="RAB"/>
    <property type="match status" value="1"/>
</dbReference>
<feature type="chain" id="PRO_0000332755" description="Ras-related protein RabH">
    <location>
        <begin position="1"/>
        <end position="195"/>
    </location>
</feature>
<feature type="propeptide" id="PRO_0000370833" description="Removed in mature form" evidence="2">
    <location>
        <begin position="196"/>
        <end position="198"/>
    </location>
</feature>
<feature type="short sequence motif" description="Effector region" evidence="1">
    <location>
        <begin position="36"/>
        <end position="44"/>
    </location>
</feature>
<feature type="binding site" evidence="1">
    <location>
        <begin position="14"/>
        <end position="21"/>
    </location>
    <ligand>
        <name>GTP</name>
        <dbReference type="ChEBI" id="CHEBI:37565"/>
    </ligand>
</feature>
<feature type="binding site" evidence="1">
    <location>
        <begin position="62"/>
        <end position="66"/>
    </location>
    <ligand>
        <name>GTP</name>
        <dbReference type="ChEBI" id="CHEBI:37565"/>
    </ligand>
</feature>
<feature type="binding site" evidence="1">
    <location>
        <begin position="120"/>
        <end position="123"/>
    </location>
    <ligand>
        <name>GTP</name>
        <dbReference type="ChEBI" id="CHEBI:37565"/>
    </ligand>
</feature>
<feature type="modified residue" description="Cysteine methyl ester" evidence="2">
    <location>
        <position position="195"/>
    </location>
</feature>
<feature type="lipid moiety-binding region" description="S-geranylgeranyl cysteine" evidence="1">
    <location>
        <position position="195"/>
    </location>
</feature>